<accession>Q97TA9</accession>
<dbReference type="EMBL" id="AE005672">
    <property type="protein sequence ID" value="AAK74224.1"/>
    <property type="molecule type" value="Genomic_DNA"/>
</dbReference>
<dbReference type="PIR" id="G95003">
    <property type="entry name" value="G95003"/>
</dbReference>
<dbReference type="RefSeq" id="WP_000009144.1">
    <property type="nucleotide sequence ID" value="NC_003028.3"/>
</dbReference>
<dbReference type="PaxDb" id="170187-SP_0034"/>
<dbReference type="EnsemblBacteria" id="AAK74224">
    <property type="protein sequence ID" value="AAK74224"/>
    <property type="gene ID" value="SP_0034"/>
</dbReference>
<dbReference type="KEGG" id="spn:SP_0034"/>
<dbReference type="eggNOG" id="COG2855">
    <property type="taxonomic scope" value="Bacteria"/>
</dbReference>
<dbReference type="PhylomeDB" id="Q97TA9"/>
<dbReference type="BioCyc" id="SPNE170187:G1FZB-40-MONOMER"/>
<dbReference type="Proteomes" id="UP000000585">
    <property type="component" value="Chromosome"/>
</dbReference>
<dbReference type="GO" id="GO:0005886">
    <property type="term" value="C:plasma membrane"/>
    <property type="evidence" value="ECO:0007669"/>
    <property type="project" value="UniProtKB-SubCell"/>
</dbReference>
<dbReference type="InterPro" id="IPR018383">
    <property type="entry name" value="UPF0324_pro"/>
</dbReference>
<dbReference type="PANTHER" id="PTHR30106">
    <property type="entry name" value="INNER MEMBRANE PROTEIN YEIH-RELATED"/>
    <property type="match status" value="1"/>
</dbReference>
<dbReference type="PANTHER" id="PTHR30106:SF1">
    <property type="entry name" value="UPF0324 MEMBRANE PROTEIN FN0533"/>
    <property type="match status" value="1"/>
</dbReference>
<dbReference type="Pfam" id="PF03601">
    <property type="entry name" value="Cons_hypoth698"/>
    <property type="match status" value="1"/>
</dbReference>
<name>Y034_STRPN</name>
<organism>
    <name type="scientific">Streptococcus pneumoniae serotype 4 (strain ATCC BAA-334 / TIGR4)</name>
    <dbReference type="NCBI Taxonomy" id="170187"/>
    <lineage>
        <taxon>Bacteria</taxon>
        <taxon>Bacillati</taxon>
        <taxon>Bacillota</taxon>
        <taxon>Bacilli</taxon>
        <taxon>Lactobacillales</taxon>
        <taxon>Streptococcaceae</taxon>
        <taxon>Streptococcus</taxon>
    </lineage>
</organism>
<comment type="subcellular location">
    <subcellularLocation>
        <location evidence="2">Cell membrane</location>
        <topology evidence="2">Multi-pass membrane protein</topology>
    </subcellularLocation>
</comment>
<comment type="similarity">
    <text evidence="2">Belongs to the UPF0324 family.</text>
</comment>
<feature type="chain" id="PRO_0000157462" description="UPF0324 membrane protein SP_0034">
    <location>
        <begin position="1"/>
        <end position="336"/>
    </location>
</feature>
<feature type="transmembrane region" description="Helical" evidence="1">
    <location>
        <begin position="65"/>
        <end position="84"/>
    </location>
</feature>
<feature type="transmembrane region" description="Helical" evidence="1">
    <location>
        <begin position="91"/>
        <end position="113"/>
    </location>
</feature>
<feature type="transmembrane region" description="Helical" evidence="1">
    <location>
        <begin position="118"/>
        <end position="140"/>
    </location>
</feature>
<feature type="transmembrane region" description="Helical" evidence="1">
    <location>
        <begin position="153"/>
        <end position="175"/>
    </location>
</feature>
<feature type="transmembrane region" description="Helical" evidence="1">
    <location>
        <begin position="211"/>
        <end position="233"/>
    </location>
</feature>
<feature type="transmembrane region" description="Helical" evidence="1">
    <location>
        <begin position="249"/>
        <end position="271"/>
    </location>
</feature>
<feature type="transmembrane region" description="Helical" evidence="1">
    <location>
        <begin position="286"/>
        <end position="305"/>
    </location>
</feature>
<feature type="transmembrane region" description="Helical" evidence="1">
    <location>
        <begin position="312"/>
        <end position="334"/>
    </location>
</feature>
<reference key="1">
    <citation type="journal article" date="2001" name="Science">
        <title>Complete genome sequence of a virulent isolate of Streptococcus pneumoniae.</title>
        <authorList>
            <person name="Tettelin H."/>
            <person name="Nelson K.E."/>
            <person name="Paulsen I.T."/>
            <person name="Eisen J.A."/>
            <person name="Read T.D."/>
            <person name="Peterson S.N."/>
            <person name="Heidelberg J.F."/>
            <person name="DeBoy R.T."/>
            <person name="Haft D.H."/>
            <person name="Dodson R.J."/>
            <person name="Durkin A.S."/>
            <person name="Gwinn M.L."/>
            <person name="Kolonay J.F."/>
            <person name="Nelson W.C."/>
            <person name="Peterson J.D."/>
            <person name="Umayam L.A."/>
            <person name="White O."/>
            <person name="Salzberg S.L."/>
            <person name="Lewis M.R."/>
            <person name="Radune D."/>
            <person name="Holtzapple E.K."/>
            <person name="Khouri H.M."/>
            <person name="Wolf A.M."/>
            <person name="Utterback T.R."/>
            <person name="Hansen C.L."/>
            <person name="McDonald L.A."/>
            <person name="Feldblyum T.V."/>
            <person name="Angiuoli S.V."/>
            <person name="Dickinson T."/>
            <person name="Hickey E.K."/>
            <person name="Holt I.E."/>
            <person name="Loftus B.J."/>
            <person name="Yang F."/>
            <person name="Smith H.O."/>
            <person name="Venter J.C."/>
            <person name="Dougherty B.A."/>
            <person name="Morrison D.A."/>
            <person name="Hollingshead S.K."/>
            <person name="Fraser C.M."/>
        </authorList>
    </citation>
    <scope>NUCLEOTIDE SEQUENCE [LARGE SCALE GENOMIC DNA]</scope>
    <source>
        <strain>ATCC BAA-334 / TIGR4</strain>
    </source>
</reference>
<keyword id="KW-1003">Cell membrane</keyword>
<keyword id="KW-0472">Membrane</keyword>
<keyword id="KW-1185">Reference proteome</keyword>
<keyword id="KW-0812">Transmembrane</keyword>
<keyword id="KW-1133">Transmembrane helix</keyword>
<proteinExistence type="inferred from homology"/>
<sequence>MSFLSKNGAGILACLLISILSWYLGGFFPVVGAPVFAIFIGMLLHPFLSSYKQLDAGLTFSSKKLLQYAVVLLGFGLNISQVFAVGQSSLPVILSTISIALIIAYLFQRFFALDTKLATLVGVGSSICGGSAIAATAPVIDAKEKEVAQAISVIFFFNVLAALIFPTLGTWLHLSNEGFALFAGTAVNDTSSVTAAASAWDSLYQSNTLESATIVKLTRTLAIIPITLFLSYWQSRQQENKQSLQLKKVFPLFILYFILASLLTTLLTSLGVSSSFFTPLKELSKFLIVMAMSAIGLKTNLVAMVKSSGKSILLGAICWIAIILTTLGMQTLIGIF</sequence>
<gene>
    <name type="ordered locus">SP_0034</name>
</gene>
<evidence type="ECO:0000255" key="1"/>
<evidence type="ECO:0000305" key="2"/>
<protein>
    <recommendedName>
        <fullName>UPF0324 membrane protein SP_0034</fullName>
    </recommendedName>
</protein>